<dbReference type="EC" id="6.1.1.21" evidence="1"/>
<dbReference type="EMBL" id="CP000038">
    <property type="protein sequence ID" value="AAZ89224.1"/>
    <property type="molecule type" value="Genomic_DNA"/>
</dbReference>
<dbReference type="RefSeq" id="WP_001107150.1">
    <property type="nucleotide sequence ID" value="NC_007384.1"/>
</dbReference>
<dbReference type="SMR" id="Q3YZ38"/>
<dbReference type="GeneID" id="93774622"/>
<dbReference type="KEGG" id="ssn:SSON_2596"/>
<dbReference type="HOGENOM" id="CLU_025113_1_1_6"/>
<dbReference type="Proteomes" id="UP000002529">
    <property type="component" value="Chromosome"/>
</dbReference>
<dbReference type="GO" id="GO:0005737">
    <property type="term" value="C:cytoplasm"/>
    <property type="evidence" value="ECO:0007669"/>
    <property type="project" value="UniProtKB-SubCell"/>
</dbReference>
<dbReference type="GO" id="GO:0005524">
    <property type="term" value="F:ATP binding"/>
    <property type="evidence" value="ECO:0007669"/>
    <property type="project" value="UniProtKB-UniRule"/>
</dbReference>
<dbReference type="GO" id="GO:0004821">
    <property type="term" value="F:histidine-tRNA ligase activity"/>
    <property type="evidence" value="ECO:0007669"/>
    <property type="project" value="UniProtKB-UniRule"/>
</dbReference>
<dbReference type="GO" id="GO:0006427">
    <property type="term" value="P:histidyl-tRNA aminoacylation"/>
    <property type="evidence" value="ECO:0007669"/>
    <property type="project" value="UniProtKB-UniRule"/>
</dbReference>
<dbReference type="CDD" id="cd00773">
    <property type="entry name" value="HisRS-like_core"/>
    <property type="match status" value="1"/>
</dbReference>
<dbReference type="CDD" id="cd00859">
    <property type="entry name" value="HisRS_anticodon"/>
    <property type="match status" value="1"/>
</dbReference>
<dbReference type="FunFam" id="3.30.930.10:FF:000005">
    <property type="entry name" value="Histidine--tRNA ligase"/>
    <property type="match status" value="1"/>
</dbReference>
<dbReference type="FunFam" id="3.40.50.800:FF:000007">
    <property type="entry name" value="Histidine--tRNA ligase"/>
    <property type="match status" value="1"/>
</dbReference>
<dbReference type="Gene3D" id="3.40.50.800">
    <property type="entry name" value="Anticodon-binding domain"/>
    <property type="match status" value="1"/>
</dbReference>
<dbReference type="Gene3D" id="3.30.930.10">
    <property type="entry name" value="Bira Bifunctional Protein, Domain 2"/>
    <property type="match status" value="1"/>
</dbReference>
<dbReference type="HAMAP" id="MF_00127">
    <property type="entry name" value="His_tRNA_synth"/>
    <property type="match status" value="1"/>
</dbReference>
<dbReference type="InterPro" id="IPR006195">
    <property type="entry name" value="aa-tRNA-synth_II"/>
</dbReference>
<dbReference type="InterPro" id="IPR045864">
    <property type="entry name" value="aa-tRNA-synth_II/BPL/LPL"/>
</dbReference>
<dbReference type="InterPro" id="IPR004154">
    <property type="entry name" value="Anticodon-bd"/>
</dbReference>
<dbReference type="InterPro" id="IPR036621">
    <property type="entry name" value="Anticodon-bd_dom_sf"/>
</dbReference>
<dbReference type="InterPro" id="IPR015807">
    <property type="entry name" value="His-tRNA-ligase"/>
</dbReference>
<dbReference type="InterPro" id="IPR041715">
    <property type="entry name" value="HisRS-like_core"/>
</dbReference>
<dbReference type="InterPro" id="IPR004516">
    <property type="entry name" value="HisRS/HisZ"/>
</dbReference>
<dbReference type="InterPro" id="IPR033656">
    <property type="entry name" value="HisRS_anticodon"/>
</dbReference>
<dbReference type="NCBIfam" id="TIGR00442">
    <property type="entry name" value="hisS"/>
    <property type="match status" value="1"/>
</dbReference>
<dbReference type="PANTHER" id="PTHR43707:SF1">
    <property type="entry name" value="HISTIDINE--TRNA LIGASE, MITOCHONDRIAL-RELATED"/>
    <property type="match status" value="1"/>
</dbReference>
<dbReference type="PANTHER" id="PTHR43707">
    <property type="entry name" value="HISTIDYL-TRNA SYNTHETASE"/>
    <property type="match status" value="1"/>
</dbReference>
<dbReference type="Pfam" id="PF03129">
    <property type="entry name" value="HGTP_anticodon"/>
    <property type="match status" value="1"/>
</dbReference>
<dbReference type="Pfam" id="PF13393">
    <property type="entry name" value="tRNA-synt_His"/>
    <property type="match status" value="1"/>
</dbReference>
<dbReference type="PIRSF" id="PIRSF001549">
    <property type="entry name" value="His-tRNA_synth"/>
    <property type="match status" value="1"/>
</dbReference>
<dbReference type="SUPFAM" id="SSF52954">
    <property type="entry name" value="Class II aaRS ABD-related"/>
    <property type="match status" value="1"/>
</dbReference>
<dbReference type="SUPFAM" id="SSF55681">
    <property type="entry name" value="Class II aaRS and biotin synthetases"/>
    <property type="match status" value="1"/>
</dbReference>
<dbReference type="PROSITE" id="PS50862">
    <property type="entry name" value="AA_TRNA_LIGASE_II"/>
    <property type="match status" value="1"/>
</dbReference>
<feature type="chain" id="PRO_1000016455" description="Histidine--tRNA ligase">
    <location>
        <begin position="1"/>
        <end position="424"/>
    </location>
</feature>
<proteinExistence type="inferred from homology"/>
<organism>
    <name type="scientific">Shigella sonnei (strain Ss046)</name>
    <dbReference type="NCBI Taxonomy" id="300269"/>
    <lineage>
        <taxon>Bacteria</taxon>
        <taxon>Pseudomonadati</taxon>
        <taxon>Pseudomonadota</taxon>
        <taxon>Gammaproteobacteria</taxon>
        <taxon>Enterobacterales</taxon>
        <taxon>Enterobacteriaceae</taxon>
        <taxon>Shigella</taxon>
    </lineage>
</organism>
<keyword id="KW-0030">Aminoacyl-tRNA synthetase</keyword>
<keyword id="KW-0067">ATP-binding</keyword>
<keyword id="KW-0963">Cytoplasm</keyword>
<keyword id="KW-0436">Ligase</keyword>
<keyword id="KW-0547">Nucleotide-binding</keyword>
<keyword id="KW-0648">Protein biosynthesis</keyword>
<keyword id="KW-1185">Reference proteome</keyword>
<accession>Q3YZ38</accession>
<name>SYH_SHISS</name>
<gene>
    <name evidence="1" type="primary">hisS</name>
    <name type="ordered locus">SSON_2596</name>
</gene>
<comment type="catalytic activity">
    <reaction evidence="1">
        <text>tRNA(His) + L-histidine + ATP = L-histidyl-tRNA(His) + AMP + diphosphate + H(+)</text>
        <dbReference type="Rhea" id="RHEA:17313"/>
        <dbReference type="Rhea" id="RHEA-COMP:9665"/>
        <dbReference type="Rhea" id="RHEA-COMP:9689"/>
        <dbReference type="ChEBI" id="CHEBI:15378"/>
        <dbReference type="ChEBI" id="CHEBI:30616"/>
        <dbReference type="ChEBI" id="CHEBI:33019"/>
        <dbReference type="ChEBI" id="CHEBI:57595"/>
        <dbReference type="ChEBI" id="CHEBI:78442"/>
        <dbReference type="ChEBI" id="CHEBI:78527"/>
        <dbReference type="ChEBI" id="CHEBI:456215"/>
        <dbReference type="EC" id="6.1.1.21"/>
    </reaction>
</comment>
<comment type="subunit">
    <text evidence="1">Homodimer.</text>
</comment>
<comment type="subcellular location">
    <subcellularLocation>
        <location evidence="1">Cytoplasm</location>
    </subcellularLocation>
</comment>
<comment type="similarity">
    <text evidence="1">Belongs to the class-II aminoacyl-tRNA synthetase family.</text>
</comment>
<protein>
    <recommendedName>
        <fullName evidence="1">Histidine--tRNA ligase</fullName>
        <ecNumber evidence="1">6.1.1.21</ecNumber>
    </recommendedName>
    <alternativeName>
        <fullName evidence="1">Histidyl-tRNA synthetase</fullName>
        <shortName evidence="1">HisRS</shortName>
    </alternativeName>
</protein>
<evidence type="ECO:0000255" key="1">
    <source>
        <dbReference type="HAMAP-Rule" id="MF_00127"/>
    </source>
</evidence>
<reference key="1">
    <citation type="journal article" date="2005" name="Nucleic Acids Res.">
        <title>Genome dynamics and diversity of Shigella species, the etiologic agents of bacillary dysentery.</title>
        <authorList>
            <person name="Yang F."/>
            <person name="Yang J."/>
            <person name="Zhang X."/>
            <person name="Chen L."/>
            <person name="Jiang Y."/>
            <person name="Yan Y."/>
            <person name="Tang X."/>
            <person name="Wang J."/>
            <person name="Xiong Z."/>
            <person name="Dong J."/>
            <person name="Xue Y."/>
            <person name="Zhu Y."/>
            <person name="Xu X."/>
            <person name="Sun L."/>
            <person name="Chen S."/>
            <person name="Nie H."/>
            <person name="Peng J."/>
            <person name="Xu J."/>
            <person name="Wang Y."/>
            <person name="Yuan Z."/>
            <person name="Wen Y."/>
            <person name="Yao Z."/>
            <person name="Shen Y."/>
            <person name="Qiang B."/>
            <person name="Hou Y."/>
            <person name="Yu J."/>
            <person name="Jin Q."/>
        </authorList>
    </citation>
    <scope>NUCLEOTIDE SEQUENCE [LARGE SCALE GENOMIC DNA]</scope>
    <source>
        <strain>Ss046</strain>
    </source>
</reference>
<sequence>MAKNIQAIRGMNDYLPGETAIWQRIEGTLKNVLGSYGYSEIRLPIVEQTPLFKRAIGEVTDVVEKEMYTFEDRNGDSLTLRPEGTAGCVRAGIEHGLLYNQEQRLWYIGPMFRHERPQKGRYRQFHQLGCEVFGLQGPDIDAELIMLTARWWRALGIFEHVTLELNSIGSLEARANYRDALVAFLEQHKEKLDEDCKRRMYTNPLRVLDSKNPEVQALLNDAPALGDYLDEESREHFAGLCKLLESAGIAYTVNQRLVRGLDYYNRTVFEWVTNSLGSQGTVCAGGRYDGLVEQLGGRATPAVGFAMGLERLVLLVQAVNPEFKADPVVDIYLVASGADTQSAAMALAERLRDELPGVKLMTNHGGGNFKKQFARADKWGARVAVVLGESEVANGTAVVKDLRSGEQTAVAQDSVAAHLRTLLG</sequence>